<gene>
    <name type="ORF">MPH_08355</name>
</gene>
<evidence type="ECO:0000255" key="1">
    <source>
        <dbReference type="PROSITE-ProRule" id="PRU00054"/>
    </source>
</evidence>
<evidence type="ECO:0000256" key="2">
    <source>
        <dbReference type="SAM" id="MobiDB-lite"/>
    </source>
</evidence>
<evidence type="ECO:0000269" key="3">
    <source>
    </source>
</evidence>
<evidence type="ECO:0000303" key="4">
    <source>
    </source>
</evidence>
<evidence type="ECO:0000305" key="5"/>
<accession>K2QXC4</accession>
<accession>A0A0P1DJB9</accession>
<organism>
    <name type="scientific">Macrophomina phaseolina (strain MS6)</name>
    <name type="common">Charcoal rot fungus</name>
    <dbReference type="NCBI Taxonomy" id="1126212"/>
    <lineage>
        <taxon>Eukaryota</taxon>
        <taxon>Fungi</taxon>
        <taxon>Dikarya</taxon>
        <taxon>Ascomycota</taxon>
        <taxon>Pezizomycotina</taxon>
        <taxon>Dothideomycetes</taxon>
        <taxon>Dothideomycetes incertae sedis</taxon>
        <taxon>Botryosphaeriales</taxon>
        <taxon>Botryosphaeriaceae</taxon>
        <taxon>Macrophomina</taxon>
    </lineage>
</organism>
<name>NIT_MACPH</name>
<sequence>MAPSLRVAVTQAEPEWLDLAGTVKKTCELITEAANNGARLIAFPECWVTGYPGWIWARPVDFELNTKYIYNSLSIGSPEFEQIASTAKRHSIAVVLGFSERTSTHSLYISQAIISPQGATLLHRRKIKPTHVERAVFGDGSGADLSNVVDVDFGGDVGVVKVGALACWEHTQPLLKYHTYSQGEVIHVAAWPPIDPHPGVEHPGLWSMSAEGCQNLSQTYAVEGGGYVLHCTGVCTEKGMETMGTHKGLLFHTPGGGHSCVIGPDGRRLTQPLHGGDPAKEGIVYADLDLTNVVANRSFLDNVGHYSRPDLLWLGVDRKQKQHVIPRDEEEPSRKANVVVPKQE</sequence>
<feature type="chain" id="PRO_0000451136" description="Arylacetonitrilase">
    <location>
        <begin position="1"/>
        <end position="344"/>
    </location>
</feature>
<feature type="domain" description="CN hydrolase" evidence="1">
    <location>
        <begin position="5"/>
        <end position="290"/>
    </location>
</feature>
<feature type="region of interest" description="Disordered" evidence="2">
    <location>
        <begin position="324"/>
        <end position="344"/>
    </location>
</feature>
<feature type="active site" description="Proton acceptor" evidence="1">
    <location>
        <position position="45"/>
    </location>
</feature>
<feature type="active site" evidence="1">
    <location>
        <position position="126"/>
    </location>
</feature>
<feature type="active site" description="Nucleophile" evidence="1">
    <location>
        <position position="167"/>
    </location>
</feature>
<protein>
    <recommendedName>
        <fullName evidence="4">Arylacetonitrilase</fullName>
        <ecNumber evidence="3">3.5.5.1</ecNumber>
        <ecNumber evidence="3">3.5.5.5</ecNumber>
    </recommendedName>
    <alternativeName>
        <fullName evidence="4">NitMp</fullName>
    </alternativeName>
</protein>
<keyword id="KW-0030">Aminoacyl-tRNA synthetase</keyword>
<keyword id="KW-0378">Hydrolase</keyword>
<keyword id="KW-0436">Ligase</keyword>
<keyword id="KW-1185">Reference proteome</keyword>
<reference key="1">
    <citation type="journal article" date="2016" name="Appl. Microbiol. Biotechnol.">
        <title>Bringing nitrilase sequences from databases to life: the search for novel substrate specificities with a focus on dinitriles.</title>
        <authorList>
            <person name="Vesela A.B."/>
            <person name="Rucka L."/>
            <person name="Kaplan O."/>
            <person name="Pelantova H."/>
            <person name="Nesvera J."/>
            <person name="Patek M."/>
            <person name="Martinkova L."/>
        </authorList>
    </citation>
    <scope>NUCLEOTIDE SEQUENCE [GENOMIC DNA]</scope>
    <scope>FUNCTION</scope>
    <scope>CATALYTIC ACTIVITY</scope>
</reference>
<reference key="2">
    <citation type="journal article" date="2012" name="BMC Genomics">
        <title>Tools to kill: Genome of one of the most destructive plant pathogenic fungi Macrophomina phaseolina.</title>
        <authorList>
            <person name="Islam M.S."/>
            <person name="Haque M.S."/>
            <person name="Islam M.M."/>
            <person name="Emdad E.M."/>
            <person name="Halim A."/>
            <person name="Hossen Q.M.M."/>
            <person name="Hossain M.Z."/>
            <person name="Ahmed B."/>
            <person name="Rahim S."/>
            <person name="Rahman M.S."/>
            <person name="Alam M.M."/>
            <person name="Hou S."/>
            <person name="Wan X."/>
            <person name="Saito J.A."/>
            <person name="Alam M."/>
        </authorList>
    </citation>
    <scope>NUCLEOTIDE SEQUENCE [LARGE SCALE GENOMIC DNA]</scope>
    <source>
        <strain>MS6</strain>
    </source>
</reference>
<comment type="function">
    <text evidence="3">Nitrilase that hydrolyzes preferentially phenylacetonitrile and (R,S)-mandelonitrile. Also acts on dinitriles like phenylenediacetonitriles (PDAs) 1,2-PDA, 1,3-PDA, and 1,4-PDA, and cyanophenyl acetonitriles (CPAs) 2-CPA and 4-CPA.</text>
</comment>
<comment type="catalytic activity">
    <reaction evidence="3">
        <text>a nitrile + 2 H2O = a carboxylate + NH4(+)</text>
        <dbReference type="Rhea" id="RHEA:21724"/>
        <dbReference type="ChEBI" id="CHEBI:15377"/>
        <dbReference type="ChEBI" id="CHEBI:18379"/>
        <dbReference type="ChEBI" id="CHEBI:28938"/>
        <dbReference type="ChEBI" id="CHEBI:29067"/>
        <dbReference type="EC" id="3.5.5.1"/>
    </reaction>
</comment>
<comment type="catalytic activity">
    <reaction evidence="3">
        <text>4-chlorophenylacetonitrile + 2 H2O = 4-chlorophenylacetate + NH4(+)</text>
        <dbReference type="Rhea" id="RHEA:20657"/>
        <dbReference type="ChEBI" id="CHEBI:15377"/>
        <dbReference type="ChEBI" id="CHEBI:16237"/>
        <dbReference type="ChEBI" id="CHEBI:17346"/>
        <dbReference type="ChEBI" id="CHEBI:28938"/>
        <dbReference type="EC" id="3.5.5.5"/>
    </reaction>
</comment>
<comment type="similarity">
    <text evidence="5">Belongs to the carbon-nitrogen hydrolase superfamily. Nitrilase family.</text>
</comment>
<proteinExistence type="evidence at protein level"/>
<dbReference type="EC" id="3.5.5.1" evidence="3"/>
<dbReference type="EC" id="3.5.5.5" evidence="3"/>
<dbReference type="EMBL" id="LN875497">
    <property type="protein sequence ID" value="CTQ87321.1"/>
    <property type="molecule type" value="Genomic_DNA"/>
</dbReference>
<dbReference type="EMBL" id="AHHD01000347">
    <property type="protein sequence ID" value="EKG14506.1"/>
    <property type="molecule type" value="Genomic_DNA"/>
</dbReference>
<dbReference type="SMR" id="K2QXC4"/>
<dbReference type="STRING" id="1126212.K2QXC4"/>
<dbReference type="VEuPathDB" id="FungiDB:MPH_08355"/>
<dbReference type="eggNOG" id="KOG0805">
    <property type="taxonomic scope" value="Eukaryota"/>
</dbReference>
<dbReference type="HOGENOM" id="CLU_030130_6_0_1"/>
<dbReference type="InParanoid" id="K2QXC4"/>
<dbReference type="OrthoDB" id="10250282at2759"/>
<dbReference type="BRENDA" id="3.5.5.5">
    <property type="organism ID" value="3139"/>
</dbReference>
<dbReference type="Proteomes" id="UP000007129">
    <property type="component" value="Unassembled WGS sequence"/>
</dbReference>
<dbReference type="GO" id="GO:0004812">
    <property type="term" value="F:aminoacyl-tRNA ligase activity"/>
    <property type="evidence" value="ECO:0007669"/>
    <property type="project" value="UniProtKB-KW"/>
</dbReference>
<dbReference type="GO" id="GO:0047428">
    <property type="term" value="F:arylacetonitrilase activity"/>
    <property type="evidence" value="ECO:0007669"/>
    <property type="project" value="UniProtKB-EC"/>
</dbReference>
<dbReference type="GO" id="GO:0016836">
    <property type="term" value="F:hydro-lyase activity"/>
    <property type="evidence" value="ECO:0007669"/>
    <property type="project" value="UniProtKB-ARBA"/>
</dbReference>
<dbReference type="CDD" id="cd07564">
    <property type="entry name" value="nitrilases_CHs"/>
    <property type="match status" value="1"/>
</dbReference>
<dbReference type="FunFam" id="3.60.110.10:FF:000011">
    <property type="entry name" value="Cyanide hydratase"/>
    <property type="match status" value="1"/>
</dbReference>
<dbReference type="Gene3D" id="3.60.110.10">
    <property type="entry name" value="Carbon-nitrogen hydrolase"/>
    <property type="match status" value="1"/>
</dbReference>
<dbReference type="InterPro" id="IPR003010">
    <property type="entry name" value="C-N_Hydrolase"/>
</dbReference>
<dbReference type="InterPro" id="IPR036526">
    <property type="entry name" value="C-N_Hydrolase_sf"/>
</dbReference>
<dbReference type="InterPro" id="IPR000132">
    <property type="entry name" value="Nitrilase/CN_hydratase_CS"/>
</dbReference>
<dbReference type="InterPro" id="IPR044149">
    <property type="entry name" value="Nitrilases_CHs"/>
</dbReference>
<dbReference type="PANTHER" id="PTHR46044:SF14">
    <property type="entry name" value="ARYLACETONITRILASE"/>
    <property type="match status" value="1"/>
</dbReference>
<dbReference type="PANTHER" id="PTHR46044">
    <property type="entry name" value="NITRILASE"/>
    <property type="match status" value="1"/>
</dbReference>
<dbReference type="Pfam" id="PF00795">
    <property type="entry name" value="CN_hydrolase"/>
    <property type="match status" value="1"/>
</dbReference>
<dbReference type="SUPFAM" id="SSF56317">
    <property type="entry name" value="Carbon-nitrogen hydrolase"/>
    <property type="match status" value="1"/>
</dbReference>
<dbReference type="PROSITE" id="PS50263">
    <property type="entry name" value="CN_HYDROLASE"/>
    <property type="match status" value="1"/>
</dbReference>
<dbReference type="PROSITE" id="PS00920">
    <property type="entry name" value="NITRIL_CHT_1"/>
    <property type="match status" value="1"/>
</dbReference>
<dbReference type="PROSITE" id="PS00921">
    <property type="entry name" value="NITRIL_CHT_2"/>
    <property type="match status" value="1"/>
</dbReference>